<reference key="1">
    <citation type="journal article" date="2005" name="Nature">
        <title>The genome sequence of the rice blast fungus Magnaporthe grisea.</title>
        <authorList>
            <person name="Dean R.A."/>
            <person name="Talbot N.J."/>
            <person name="Ebbole D.J."/>
            <person name="Farman M.L."/>
            <person name="Mitchell T.K."/>
            <person name="Orbach M.J."/>
            <person name="Thon M.R."/>
            <person name="Kulkarni R."/>
            <person name="Xu J.-R."/>
            <person name="Pan H."/>
            <person name="Read N.D."/>
            <person name="Lee Y.-H."/>
            <person name="Carbone I."/>
            <person name="Brown D."/>
            <person name="Oh Y.Y."/>
            <person name="Donofrio N."/>
            <person name="Jeong J.S."/>
            <person name="Soanes D.M."/>
            <person name="Djonovic S."/>
            <person name="Kolomiets E."/>
            <person name="Rehmeyer C."/>
            <person name="Li W."/>
            <person name="Harding M."/>
            <person name="Kim S."/>
            <person name="Lebrun M.-H."/>
            <person name="Bohnert H."/>
            <person name="Coughlan S."/>
            <person name="Butler J."/>
            <person name="Calvo S.E."/>
            <person name="Ma L.-J."/>
            <person name="Nicol R."/>
            <person name="Purcell S."/>
            <person name="Nusbaum C."/>
            <person name="Galagan J.E."/>
            <person name="Birren B.W."/>
        </authorList>
    </citation>
    <scope>NUCLEOTIDE SEQUENCE [LARGE SCALE GENOMIC DNA]</scope>
    <source>
        <strain>70-15 / ATCC MYA-4617 / FGSC 8958</strain>
    </source>
</reference>
<proteinExistence type="inferred from homology"/>
<sequence length="396" mass="44749">MADKGLEDVPEGQIESNYDETVDSFDEMNLKSELLRGIYAYGFERPSAIQQRAIMPVIKGHDVIAQAQSGTGKTATFSISVLQKIDTNVKQCQALILAPTRELAQQIQKVVVAIGDFMNIECHACIGGTSVRDDMKALQDGPQVVVGTPGRVHDMIQRRFLKTDGMKMFVLDEADEMLSRGFTEQIYDIFQLLPQSTQVVLLSATMPQDVLEVTTKFMRDPVRILVKKDELTLEGIKQFYIAVEKEEWKLDTLSDLYETVTITQAVIFCNTRRKVDWLTDKLTARDFTVSAMHGDMDQAQRDLIMKEFRSGSSRVLIATDLLARGIDVQQVSLVINYDLPANRENYIHRIGRGGRFGRKGVAINFVTADDVRMMREIEQFYSTQIEEMPMNVADLI</sequence>
<gene>
    <name type="primary">TIF1</name>
    <name type="synonym">TIF41</name>
    <name type="ORF">MGG_04400</name>
</gene>
<keyword id="KW-0067">ATP-binding</keyword>
<keyword id="KW-0963">Cytoplasm</keyword>
<keyword id="KW-0347">Helicase</keyword>
<keyword id="KW-0378">Hydrolase</keyword>
<keyword id="KW-0396">Initiation factor</keyword>
<keyword id="KW-0547">Nucleotide-binding</keyword>
<keyword id="KW-0648">Protein biosynthesis</keyword>
<keyword id="KW-1185">Reference proteome</keyword>
<keyword id="KW-0694">RNA-binding</keyword>
<organism>
    <name type="scientific">Pyricularia oryzae (strain 70-15 / ATCC MYA-4617 / FGSC 8958)</name>
    <name type="common">Rice blast fungus</name>
    <name type="synonym">Magnaporthe oryzae</name>
    <dbReference type="NCBI Taxonomy" id="242507"/>
    <lineage>
        <taxon>Eukaryota</taxon>
        <taxon>Fungi</taxon>
        <taxon>Dikarya</taxon>
        <taxon>Ascomycota</taxon>
        <taxon>Pezizomycotina</taxon>
        <taxon>Sordariomycetes</taxon>
        <taxon>Sordariomycetidae</taxon>
        <taxon>Magnaporthales</taxon>
        <taxon>Pyriculariaceae</taxon>
        <taxon>Pyricularia</taxon>
    </lineage>
</organism>
<comment type="function">
    <text evidence="1">ATP-dependent RNA helicase which is a subunit of the eIF4F complex involved in cap recognition and is required for mRNA binding to ribosome. In the current model of translation initiation, eIF4A unwinds RNA secondary structures in the 5'-UTR of mRNAs which is necessary to allow efficient binding of the small ribosomal subunit, and subsequent scanning for the initiator codon (By similarity).</text>
</comment>
<comment type="catalytic activity">
    <reaction>
        <text>ATP + H2O = ADP + phosphate + H(+)</text>
        <dbReference type="Rhea" id="RHEA:13065"/>
        <dbReference type="ChEBI" id="CHEBI:15377"/>
        <dbReference type="ChEBI" id="CHEBI:15378"/>
        <dbReference type="ChEBI" id="CHEBI:30616"/>
        <dbReference type="ChEBI" id="CHEBI:43474"/>
        <dbReference type="ChEBI" id="CHEBI:456216"/>
        <dbReference type="EC" id="3.6.4.13"/>
    </reaction>
</comment>
<comment type="subunit">
    <text evidence="1">Component of the eIF4F complex, which composition varies with external and internal environmental conditions. It is composed of at least eIF4A, eIF4E and eIF4G (By similarity).</text>
</comment>
<comment type="subcellular location">
    <subcellularLocation>
        <location evidence="1">Cytoplasm</location>
    </subcellularLocation>
</comment>
<comment type="domain">
    <text>The Q motif is unique to and characteristic of the DEAD box family of RNA helicases and controls ATP binding and hydrolysis.</text>
</comment>
<comment type="similarity">
    <text evidence="4">Belongs to the DEAD box helicase family. eIF4A subfamily.</text>
</comment>
<protein>
    <recommendedName>
        <fullName>ATP-dependent RNA helicase eIF4A</fullName>
        <ecNumber>3.6.4.13</ecNumber>
    </recommendedName>
    <alternativeName>
        <fullName>Eukaryotic initiation factor 4A</fullName>
        <shortName>eIF-4A</shortName>
    </alternativeName>
    <alternativeName>
        <fullName>Translation initiation factor 1</fullName>
    </alternativeName>
</protein>
<dbReference type="EC" id="3.6.4.13"/>
<dbReference type="EMBL" id="CM001231">
    <property type="protein sequence ID" value="EHA58403.1"/>
    <property type="molecule type" value="Genomic_DNA"/>
</dbReference>
<dbReference type="RefSeq" id="XP_003711015.1">
    <property type="nucleotide sequence ID" value="XM_003710967.1"/>
</dbReference>
<dbReference type="SMR" id="A4QVP2"/>
<dbReference type="FunCoup" id="A4QVP2">
    <property type="interactions" value="1224"/>
</dbReference>
<dbReference type="STRING" id="242507.A4QVP2"/>
<dbReference type="EnsemblFungi" id="MGG_04400T0">
    <property type="protein sequence ID" value="MGG_04400T0"/>
    <property type="gene ID" value="MGG_04400"/>
</dbReference>
<dbReference type="GeneID" id="2677872"/>
<dbReference type="KEGG" id="mgr:MGG_04400"/>
<dbReference type="VEuPathDB" id="FungiDB:MGG_04400"/>
<dbReference type="eggNOG" id="KOG0327">
    <property type="taxonomic scope" value="Eukaryota"/>
</dbReference>
<dbReference type="HOGENOM" id="CLU_003041_1_0_1"/>
<dbReference type="InParanoid" id="A4QVP2"/>
<dbReference type="OMA" id="FGCQALV"/>
<dbReference type="OrthoDB" id="10265785at2759"/>
<dbReference type="Proteomes" id="UP000009058">
    <property type="component" value="Chromosome 1"/>
</dbReference>
<dbReference type="GO" id="GO:0005737">
    <property type="term" value="C:cytoplasm"/>
    <property type="evidence" value="ECO:0007669"/>
    <property type="project" value="UniProtKB-SubCell"/>
</dbReference>
<dbReference type="GO" id="GO:0005524">
    <property type="term" value="F:ATP binding"/>
    <property type="evidence" value="ECO:0007669"/>
    <property type="project" value="UniProtKB-KW"/>
</dbReference>
<dbReference type="GO" id="GO:0016887">
    <property type="term" value="F:ATP hydrolysis activity"/>
    <property type="evidence" value="ECO:0007669"/>
    <property type="project" value="RHEA"/>
</dbReference>
<dbReference type="GO" id="GO:0003723">
    <property type="term" value="F:RNA binding"/>
    <property type="evidence" value="ECO:0007669"/>
    <property type="project" value="UniProtKB-KW"/>
</dbReference>
<dbReference type="GO" id="GO:0003724">
    <property type="term" value="F:RNA helicase activity"/>
    <property type="evidence" value="ECO:0007669"/>
    <property type="project" value="UniProtKB-EC"/>
</dbReference>
<dbReference type="GO" id="GO:0003743">
    <property type="term" value="F:translation initiation factor activity"/>
    <property type="evidence" value="ECO:0007669"/>
    <property type="project" value="UniProtKB-KW"/>
</dbReference>
<dbReference type="GO" id="GO:0002183">
    <property type="term" value="P:cytoplasmic translational initiation"/>
    <property type="evidence" value="ECO:0007669"/>
    <property type="project" value="EnsemblFungi"/>
</dbReference>
<dbReference type="CDD" id="cd18046">
    <property type="entry name" value="DEADc_EIF4AII_EIF4AI_DDX2"/>
    <property type="match status" value="1"/>
</dbReference>
<dbReference type="CDD" id="cd18787">
    <property type="entry name" value="SF2_C_DEAD"/>
    <property type="match status" value="1"/>
</dbReference>
<dbReference type="FunFam" id="3.40.50.300:FF:000089">
    <property type="entry name" value="Eukaryotic initiation factor 4A-II"/>
    <property type="match status" value="1"/>
</dbReference>
<dbReference type="FunFam" id="3.40.50.300:FF:000031">
    <property type="entry name" value="Eukaryotic initiation factor 4A-III"/>
    <property type="match status" value="1"/>
</dbReference>
<dbReference type="Gene3D" id="3.40.50.300">
    <property type="entry name" value="P-loop containing nucleotide triphosphate hydrolases"/>
    <property type="match status" value="2"/>
</dbReference>
<dbReference type="InterPro" id="IPR011545">
    <property type="entry name" value="DEAD/DEAH_box_helicase_dom"/>
</dbReference>
<dbReference type="InterPro" id="IPR044728">
    <property type="entry name" value="EIF4A_DEADc"/>
</dbReference>
<dbReference type="InterPro" id="IPR014001">
    <property type="entry name" value="Helicase_ATP-bd"/>
</dbReference>
<dbReference type="InterPro" id="IPR001650">
    <property type="entry name" value="Helicase_C-like"/>
</dbReference>
<dbReference type="InterPro" id="IPR027417">
    <property type="entry name" value="P-loop_NTPase"/>
</dbReference>
<dbReference type="InterPro" id="IPR000629">
    <property type="entry name" value="RNA-helicase_DEAD-box_CS"/>
</dbReference>
<dbReference type="InterPro" id="IPR014014">
    <property type="entry name" value="RNA_helicase_DEAD_Q_motif"/>
</dbReference>
<dbReference type="PANTHER" id="PTHR47958">
    <property type="entry name" value="ATP-DEPENDENT RNA HELICASE DBP3"/>
    <property type="match status" value="1"/>
</dbReference>
<dbReference type="Pfam" id="PF00270">
    <property type="entry name" value="DEAD"/>
    <property type="match status" value="1"/>
</dbReference>
<dbReference type="Pfam" id="PF00271">
    <property type="entry name" value="Helicase_C"/>
    <property type="match status" value="1"/>
</dbReference>
<dbReference type="SMART" id="SM00487">
    <property type="entry name" value="DEXDc"/>
    <property type="match status" value="1"/>
</dbReference>
<dbReference type="SMART" id="SM00490">
    <property type="entry name" value="HELICc"/>
    <property type="match status" value="1"/>
</dbReference>
<dbReference type="SUPFAM" id="SSF52540">
    <property type="entry name" value="P-loop containing nucleoside triphosphate hydrolases"/>
    <property type="match status" value="2"/>
</dbReference>
<dbReference type="PROSITE" id="PS00039">
    <property type="entry name" value="DEAD_ATP_HELICASE"/>
    <property type="match status" value="1"/>
</dbReference>
<dbReference type="PROSITE" id="PS51192">
    <property type="entry name" value="HELICASE_ATP_BIND_1"/>
    <property type="match status" value="1"/>
</dbReference>
<dbReference type="PROSITE" id="PS51194">
    <property type="entry name" value="HELICASE_CTER"/>
    <property type="match status" value="1"/>
</dbReference>
<dbReference type="PROSITE" id="PS51195">
    <property type="entry name" value="Q_MOTIF"/>
    <property type="match status" value="1"/>
</dbReference>
<evidence type="ECO:0000250" key="1"/>
<evidence type="ECO:0000255" key="2">
    <source>
        <dbReference type="PROSITE-ProRule" id="PRU00541"/>
    </source>
</evidence>
<evidence type="ECO:0000255" key="3">
    <source>
        <dbReference type="PROSITE-ProRule" id="PRU00542"/>
    </source>
</evidence>
<evidence type="ECO:0000305" key="4"/>
<name>IF4A_PYRO7</name>
<accession>A4QVP2</accession>
<accession>G4MKM0</accession>
<feature type="chain" id="PRO_0000294605" description="ATP-dependent RNA helicase eIF4A">
    <location>
        <begin position="1"/>
        <end position="396"/>
    </location>
</feature>
<feature type="domain" description="Helicase ATP-binding" evidence="2">
    <location>
        <begin position="54"/>
        <end position="224"/>
    </location>
</feature>
<feature type="domain" description="Helicase C-terminal" evidence="3">
    <location>
        <begin position="235"/>
        <end position="396"/>
    </location>
</feature>
<feature type="short sequence motif" description="Q motif">
    <location>
        <begin position="23"/>
        <end position="51"/>
    </location>
</feature>
<feature type="short sequence motif" description="DEAD box">
    <location>
        <begin position="172"/>
        <end position="175"/>
    </location>
</feature>
<feature type="binding site" evidence="2">
    <location>
        <begin position="67"/>
        <end position="74"/>
    </location>
    <ligand>
        <name>ATP</name>
        <dbReference type="ChEBI" id="CHEBI:30616"/>
    </ligand>
</feature>